<sequence>MGALTKAEMAERLYEELGLNKREAKELVELFFEEIRQALELNEQVKLSGFGNFDLRDKRQRPGRNPKTGEEIPITARRVVTFRPGQKLKARVEAYAGTKS</sequence>
<proteinExistence type="inferred from homology"/>
<name>IHFA_ECTM1</name>
<dbReference type="EMBL" id="CP000680">
    <property type="protein sequence ID" value="ABP84743.1"/>
    <property type="molecule type" value="Genomic_DNA"/>
</dbReference>
<dbReference type="SMR" id="A4XTS7"/>
<dbReference type="STRING" id="399739.Pmen_1982"/>
<dbReference type="KEGG" id="pmy:Pmen_1982"/>
<dbReference type="eggNOG" id="COG0776">
    <property type="taxonomic scope" value="Bacteria"/>
</dbReference>
<dbReference type="HOGENOM" id="CLU_105066_1_3_6"/>
<dbReference type="OrthoDB" id="9797747at2"/>
<dbReference type="GO" id="GO:0005829">
    <property type="term" value="C:cytosol"/>
    <property type="evidence" value="ECO:0007669"/>
    <property type="project" value="TreeGrafter"/>
</dbReference>
<dbReference type="GO" id="GO:0003677">
    <property type="term" value="F:DNA binding"/>
    <property type="evidence" value="ECO:0007669"/>
    <property type="project" value="UniProtKB-UniRule"/>
</dbReference>
<dbReference type="GO" id="GO:0030527">
    <property type="term" value="F:structural constituent of chromatin"/>
    <property type="evidence" value="ECO:0007669"/>
    <property type="project" value="InterPro"/>
</dbReference>
<dbReference type="GO" id="GO:0006310">
    <property type="term" value="P:DNA recombination"/>
    <property type="evidence" value="ECO:0007669"/>
    <property type="project" value="UniProtKB-UniRule"/>
</dbReference>
<dbReference type="GO" id="GO:0009893">
    <property type="term" value="P:positive regulation of metabolic process"/>
    <property type="evidence" value="ECO:0007669"/>
    <property type="project" value="UniProtKB-ARBA"/>
</dbReference>
<dbReference type="GO" id="GO:0006355">
    <property type="term" value="P:regulation of DNA-templated transcription"/>
    <property type="evidence" value="ECO:0007669"/>
    <property type="project" value="UniProtKB-UniRule"/>
</dbReference>
<dbReference type="GO" id="GO:0006417">
    <property type="term" value="P:regulation of translation"/>
    <property type="evidence" value="ECO:0007669"/>
    <property type="project" value="UniProtKB-UniRule"/>
</dbReference>
<dbReference type="CDD" id="cd13835">
    <property type="entry name" value="IHF_A"/>
    <property type="match status" value="1"/>
</dbReference>
<dbReference type="FunFam" id="4.10.520.10:FF:000002">
    <property type="entry name" value="Integration host factor subunit alpha"/>
    <property type="match status" value="1"/>
</dbReference>
<dbReference type="Gene3D" id="4.10.520.10">
    <property type="entry name" value="IHF-like DNA-binding proteins"/>
    <property type="match status" value="1"/>
</dbReference>
<dbReference type="HAMAP" id="MF_00380">
    <property type="entry name" value="IHF_alpha"/>
    <property type="match status" value="1"/>
</dbReference>
<dbReference type="InterPro" id="IPR000119">
    <property type="entry name" value="Hist_DNA-bd"/>
</dbReference>
<dbReference type="InterPro" id="IPR020816">
    <property type="entry name" value="Histone-like_DNA-bd_CS"/>
</dbReference>
<dbReference type="InterPro" id="IPR010992">
    <property type="entry name" value="IHF-like_DNA-bd_dom_sf"/>
</dbReference>
<dbReference type="InterPro" id="IPR005684">
    <property type="entry name" value="IHF_alpha"/>
</dbReference>
<dbReference type="NCBIfam" id="TIGR00987">
    <property type="entry name" value="himA"/>
    <property type="match status" value="1"/>
</dbReference>
<dbReference type="NCBIfam" id="NF001401">
    <property type="entry name" value="PRK00285.1"/>
    <property type="match status" value="1"/>
</dbReference>
<dbReference type="PANTHER" id="PTHR33175">
    <property type="entry name" value="DNA-BINDING PROTEIN HU"/>
    <property type="match status" value="1"/>
</dbReference>
<dbReference type="PANTHER" id="PTHR33175:SF2">
    <property type="entry name" value="INTEGRATION HOST FACTOR SUBUNIT ALPHA"/>
    <property type="match status" value="1"/>
</dbReference>
<dbReference type="Pfam" id="PF00216">
    <property type="entry name" value="Bac_DNA_binding"/>
    <property type="match status" value="1"/>
</dbReference>
<dbReference type="PRINTS" id="PR01727">
    <property type="entry name" value="DNABINDINGHU"/>
</dbReference>
<dbReference type="SMART" id="SM00411">
    <property type="entry name" value="BHL"/>
    <property type="match status" value="1"/>
</dbReference>
<dbReference type="SUPFAM" id="SSF47729">
    <property type="entry name" value="IHF-like DNA-binding proteins"/>
    <property type="match status" value="1"/>
</dbReference>
<dbReference type="PROSITE" id="PS00045">
    <property type="entry name" value="HISTONE_LIKE"/>
    <property type="match status" value="1"/>
</dbReference>
<gene>
    <name evidence="1" type="primary">ihfA</name>
    <name evidence="1" type="synonym">himA</name>
    <name type="ordered locus">Pmen_1982</name>
</gene>
<evidence type="ECO:0000255" key="1">
    <source>
        <dbReference type="HAMAP-Rule" id="MF_00380"/>
    </source>
</evidence>
<organism>
    <name type="scientific">Ectopseudomonas mendocina (strain ymp)</name>
    <name type="common">Pseudomonas mendocina</name>
    <dbReference type="NCBI Taxonomy" id="399739"/>
    <lineage>
        <taxon>Bacteria</taxon>
        <taxon>Pseudomonadati</taxon>
        <taxon>Pseudomonadota</taxon>
        <taxon>Gammaproteobacteria</taxon>
        <taxon>Pseudomonadales</taxon>
        <taxon>Pseudomonadaceae</taxon>
        <taxon>Ectopseudomonas</taxon>
    </lineage>
</organism>
<comment type="function">
    <text evidence="1">This protein is one of the two subunits of integration host factor, a specific DNA-binding protein that functions in genetic recombination as well as in transcriptional and translational control.</text>
</comment>
<comment type="subunit">
    <text evidence="1">Heterodimer of an alpha and a beta chain.</text>
</comment>
<comment type="similarity">
    <text evidence="1">Belongs to the bacterial histone-like protein family.</text>
</comment>
<keyword id="KW-0233">DNA recombination</keyword>
<keyword id="KW-0238">DNA-binding</keyword>
<keyword id="KW-0804">Transcription</keyword>
<keyword id="KW-0805">Transcription regulation</keyword>
<keyword id="KW-0810">Translation regulation</keyword>
<reference key="1">
    <citation type="submission" date="2007-04" db="EMBL/GenBank/DDBJ databases">
        <title>Complete sequence of Pseudomonas mendocina ymp.</title>
        <authorList>
            <consortium name="US DOE Joint Genome Institute"/>
            <person name="Copeland A."/>
            <person name="Lucas S."/>
            <person name="Lapidus A."/>
            <person name="Barry K."/>
            <person name="Glavina del Rio T."/>
            <person name="Dalin E."/>
            <person name="Tice H."/>
            <person name="Pitluck S."/>
            <person name="Kiss H."/>
            <person name="Brettin T."/>
            <person name="Detter J.C."/>
            <person name="Bruce D."/>
            <person name="Han C."/>
            <person name="Schmutz J."/>
            <person name="Larimer F."/>
            <person name="Land M."/>
            <person name="Hauser L."/>
            <person name="Kyrpides N."/>
            <person name="Mikhailova N."/>
            <person name="Hersman L."/>
            <person name="Dubois J."/>
            <person name="Maurice P."/>
            <person name="Richardson P."/>
        </authorList>
    </citation>
    <scope>NUCLEOTIDE SEQUENCE [LARGE SCALE GENOMIC DNA]</scope>
    <source>
        <strain>ymp</strain>
    </source>
</reference>
<accession>A4XTS7</accession>
<feature type="chain" id="PRO_1000060556" description="Integration host factor subunit alpha">
    <location>
        <begin position="1"/>
        <end position="100"/>
    </location>
</feature>
<protein>
    <recommendedName>
        <fullName evidence="1">Integration host factor subunit alpha</fullName>
        <shortName evidence="1">IHF-alpha</shortName>
    </recommendedName>
</protein>